<keyword id="KW-1185">Reference proteome</keyword>
<keyword id="KW-0687">Ribonucleoprotein</keyword>
<keyword id="KW-0689">Ribosomal protein</keyword>
<keyword id="KW-0694">RNA-binding</keyword>
<keyword id="KW-0699">rRNA-binding</keyword>
<name>RS17_NOSS1</name>
<reference key="1">
    <citation type="journal article" date="2001" name="DNA Res.">
        <title>Complete genomic sequence of the filamentous nitrogen-fixing cyanobacterium Anabaena sp. strain PCC 7120.</title>
        <authorList>
            <person name="Kaneko T."/>
            <person name="Nakamura Y."/>
            <person name="Wolk C.P."/>
            <person name="Kuritz T."/>
            <person name="Sasamoto S."/>
            <person name="Watanabe A."/>
            <person name="Iriguchi M."/>
            <person name="Ishikawa A."/>
            <person name="Kawashima K."/>
            <person name="Kimura T."/>
            <person name="Kishida Y."/>
            <person name="Kohara M."/>
            <person name="Matsumoto M."/>
            <person name="Matsuno A."/>
            <person name="Muraki A."/>
            <person name="Nakazaki N."/>
            <person name="Shimpo S."/>
            <person name="Sugimoto M."/>
            <person name="Takazawa M."/>
            <person name="Yamada M."/>
            <person name="Yasuda M."/>
            <person name="Tabata S."/>
        </authorList>
    </citation>
    <scope>NUCLEOTIDE SEQUENCE [LARGE SCALE GENOMIC DNA]</scope>
    <source>
        <strain>PCC 7120 / SAG 25.82 / UTEX 2576</strain>
    </source>
</reference>
<comment type="function">
    <text evidence="1">One of the primary rRNA binding proteins, it binds specifically to the 5'-end of 16S ribosomal RNA.</text>
</comment>
<comment type="subunit">
    <text evidence="1">Part of the 30S ribosomal subunit.</text>
</comment>
<comment type="similarity">
    <text evidence="1">Belongs to the universal ribosomal protein uS17 family.</text>
</comment>
<gene>
    <name evidence="1" type="primary">rpsQ</name>
    <name evidence="1" type="synonym">rps17</name>
    <name type="ordered locus">asl4206</name>
</gene>
<dbReference type="EMBL" id="BA000019">
    <property type="protein sequence ID" value="BAB75905.1"/>
    <property type="molecule type" value="Genomic_DNA"/>
</dbReference>
<dbReference type="PIR" id="AG2331">
    <property type="entry name" value="AG2331"/>
</dbReference>
<dbReference type="RefSeq" id="WP_010998344.1">
    <property type="nucleotide sequence ID" value="NZ_RSCN01000010.1"/>
</dbReference>
<dbReference type="SMR" id="Q8YPI8"/>
<dbReference type="STRING" id="103690.gene:10496255"/>
<dbReference type="GeneID" id="58723358"/>
<dbReference type="KEGG" id="ana:asl4206"/>
<dbReference type="eggNOG" id="COG0186">
    <property type="taxonomic scope" value="Bacteria"/>
</dbReference>
<dbReference type="OrthoDB" id="9811714at2"/>
<dbReference type="Proteomes" id="UP000002483">
    <property type="component" value="Chromosome"/>
</dbReference>
<dbReference type="GO" id="GO:0022627">
    <property type="term" value="C:cytosolic small ribosomal subunit"/>
    <property type="evidence" value="ECO:0007669"/>
    <property type="project" value="TreeGrafter"/>
</dbReference>
<dbReference type="GO" id="GO:0019843">
    <property type="term" value="F:rRNA binding"/>
    <property type="evidence" value="ECO:0007669"/>
    <property type="project" value="UniProtKB-UniRule"/>
</dbReference>
<dbReference type="GO" id="GO:0003735">
    <property type="term" value="F:structural constituent of ribosome"/>
    <property type="evidence" value="ECO:0007669"/>
    <property type="project" value="InterPro"/>
</dbReference>
<dbReference type="GO" id="GO:0006412">
    <property type="term" value="P:translation"/>
    <property type="evidence" value="ECO:0007669"/>
    <property type="project" value="UniProtKB-UniRule"/>
</dbReference>
<dbReference type="CDD" id="cd00364">
    <property type="entry name" value="Ribosomal_uS17"/>
    <property type="match status" value="1"/>
</dbReference>
<dbReference type="FunFam" id="2.40.50.140:FF:000123">
    <property type="entry name" value="30S ribosomal protein S17"/>
    <property type="match status" value="1"/>
</dbReference>
<dbReference type="Gene3D" id="2.40.50.140">
    <property type="entry name" value="Nucleic acid-binding proteins"/>
    <property type="match status" value="1"/>
</dbReference>
<dbReference type="HAMAP" id="MF_01345_B">
    <property type="entry name" value="Ribosomal_uS17_B"/>
    <property type="match status" value="1"/>
</dbReference>
<dbReference type="InterPro" id="IPR012340">
    <property type="entry name" value="NA-bd_OB-fold"/>
</dbReference>
<dbReference type="InterPro" id="IPR000266">
    <property type="entry name" value="Ribosomal_uS17"/>
</dbReference>
<dbReference type="InterPro" id="IPR019984">
    <property type="entry name" value="Ribosomal_uS17_bact/chlr"/>
</dbReference>
<dbReference type="InterPro" id="IPR019979">
    <property type="entry name" value="Ribosomal_uS17_CS"/>
</dbReference>
<dbReference type="NCBIfam" id="NF004123">
    <property type="entry name" value="PRK05610.1"/>
    <property type="match status" value="1"/>
</dbReference>
<dbReference type="NCBIfam" id="TIGR03635">
    <property type="entry name" value="uS17_bact"/>
    <property type="match status" value="1"/>
</dbReference>
<dbReference type="PANTHER" id="PTHR10744">
    <property type="entry name" value="40S RIBOSOMAL PROTEIN S11 FAMILY MEMBER"/>
    <property type="match status" value="1"/>
</dbReference>
<dbReference type="PANTHER" id="PTHR10744:SF1">
    <property type="entry name" value="SMALL RIBOSOMAL SUBUNIT PROTEIN US17M"/>
    <property type="match status" value="1"/>
</dbReference>
<dbReference type="Pfam" id="PF00366">
    <property type="entry name" value="Ribosomal_S17"/>
    <property type="match status" value="1"/>
</dbReference>
<dbReference type="PRINTS" id="PR00973">
    <property type="entry name" value="RIBOSOMALS17"/>
</dbReference>
<dbReference type="SUPFAM" id="SSF50249">
    <property type="entry name" value="Nucleic acid-binding proteins"/>
    <property type="match status" value="1"/>
</dbReference>
<dbReference type="PROSITE" id="PS00056">
    <property type="entry name" value="RIBOSOMAL_S17"/>
    <property type="match status" value="1"/>
</dbReference>
<proteinExistence type="inferred from homology"/>
<evidence type="ECO:0000255" key="1">
    <source>
        <dbReference type="HAMAP-Rule" id="MF_01345"/>
    </source>
</evidence>
<evidence type="ECO:0000305" key="2"/>
<sequence length="81" mass="9355">MAIKERVGLVVSDKMQKTVVVAIENRAPHPKYGKIVVKTRRYKAHDEDNKCKVGDRVRIQETRPLSKTKRWQVAEILNTKA</sequence>
<accession>Q8YPI8</accession>
<feature type="chain" id="PRO_0000233413" description="Small ribosomal subunit protein uS17">
    <location>
        <begin position="1"/>
        <end position="81"/>
    </location>
</feature>
<organism>
    <name type="scientific">Nostoc sp. (strain PCC 7120 / SAG 25.82 / UTEX 2576)</name>
    <dbReference type="NCBI Taxonomy" id="103690"/>
    <lineage>
        <taxon>Bacteria</taxon>
        <taxon>Bacillati</taxon>
        <taxon>Cyanobacteriota</taxon>
        <taxon>Cyanophyceae</taxon>
        <taxon>Nostocales</taxon>
        <taxon>Nostocaceae</taxon>
        <taxon>Nostoc</taxon>
    </lineage>
</organism>
<protein>
    <recommendedName>
        <fullName evidence="1">Small ribosomal subunit protein uS17</fullName>
    </recommendedName>
    <alternativeName>
        <fullName evidence="2">30S ribosomal protein S17</fullName>
    </alternativeName>
</protein>